<dbReference type="EMBL" id="CP000038">
    <property type="protein sequence ID" value="AAZ88633.1"/>
    <property type="molecule type" value="Genomic_DNA"/>
</dbReference>
<dbReference type="RefSeq" id="WP_000804726.1">
    <property type="nucleotide sequence ID" value="NC_007384.1"/>
</dbReference>
<dbReference type="SMR" id="Q3Z0S9"/>
<dbReference type="GeneID" id="93775276"/>
<dbReference type="KEGG" id="ssn:SSON_1967"/>
<dbReference type="HOGENOM" id="CLU_036856_0_1_6"/>
<dbReference type="Proteomes" id="UP000002529">
    <property type="component" value="Chromosome"/>
</dbReference>
<dbReference type="GO" id="GO:0005737">
    <property type="term" value="C:cytoplasm"/>
    <property type="evidence" value="ECO:0007669"/>
    <property type="project" value="UniProtKB-SubCell"/>
</dbReference>
<dbReference type="GO" id="GO:0016149">
    <property type="term" value="F:translation release factor activity, codon specific"/>
    <property type="evidence" value="ECO:0007669"/>
    <property type="project" value="UniProtKB-UniRule"/>
</dbReference>
<dbReference type="FunFam" id="3.30.160.20:FF:000004">
    <property type="entry name" value="Peptide chain release factor 1"/>
    <property type="match status" value="1"/>
</dbReference>
<dbReference type="FunFam" id="3.30.70.1660:FF:000002">
    <property type="entry name" value="Peptide chain release factor 1"/>
    <property type="match status" value="1"/>
</dbReference>
<dbReference type="FunFam" id="3.30.70.1660:FF:000004">
    <property type="entry name" value="Peptide chain release factor 1"/>
    <property type="match status" value="1"/>
</dbReference>
<dbReference type="Gene3D" id="3.30.160.20">
    <property type="match status" value="1"/>
</dbReference>
<dbReference type="Gene3D" id="3.30.70.1660">
    <property type="match status" value="1"/>
</dbReference>
<dbReference type="Gene3D" id="6.10.140.1950">
    <property type="match status" value="1"/>
</dbReference>
<dbReference type="HAMAP" id="MF_00093">
    <property type="entry name" value="Rel_fac_1"/>
    <property type="match status" value="1"/>
</dbReference>
<dbReference type="InterPro" id="IPR005139">
    <property type="entry name" value="PCRF"/>
</dbReference>
<dbReference type="InterPro" id="IPR000352">
    <property type="entry name" value="Pep_chain_release_fac_I"/>
</dbReference>
<dbReference type="InterPro" id="IPR045853">
    <property type="entry name" value="Pep_chain_release_fac_I_sf"/>
</dbReference>
<dbReference type="InterPro" id="IPR050057">
    <property type="entry name" value="Prokaryotic/Mito_RF"/>
</dbReference>
<dbReference type="InterPro" id="IPR004373">
    <property type="entry name" value="RF-1"/>
</dbReference>
<dbReference type="NCBIfam" id="TIGR00019">
    <property type="entry name" value="prfA"/>
    <property type="match status" value="1"/>
</dbReference>
<dbReference type="NCBIfam" id="NF001859">
    <property type="entry name" value="PRK00591.1"/>
    <property type="match status" value="1"/>
</dbReference>
<dbReference type="PANTHER" id="PTHR43804">
    <property type="entry name" value="LD18447P"/>
    <property type="match status" value="1"/>
</dbReference>
<dbReference type="PANTHER" id="PTHR43804:SF7">
    <property type="entry name" value="LD18447P"/>
    <property type="match status" value="1"/>
</dbReference>
<dbReference type="Pfam" id="PF03462">
    <property type="entry name" value="PCRF"/>
    <property type="match status" value="1"/>
</dbReference>
<dbReference type="Pfam" id="PF00472">
    <property type="entry name" value="RF-1"/>
    <property type="match status" value="1"/>
</dbReference>
<dbReference type="SMART" id="SM00937">
    <property type="entry name" value="PCRF"/>
    <property type="match status" value="1"/>
</dbReference>
<dbReference type="SUPFAM" id="SSF75620">
    <property type="entry name" value="Release factor"/>
    <property type="match status" value="1"/>
</dbReference>
<dbReference type="PROSITE" id="PS00745">
    <property type="entry name" value="RF_PROK_I"/>
    <property type="match status" value="1"/>
</dbReference>
<comment type="function">
    <text evidence="1">Peptide chain release factor 1 directs the termination of translation in response to the peptide chain termination codons UAG and UAA.</text>
</comment>
<comment type="subcellular location">
    <subcellularLocation>
        <location evidence="1">Cytoplasm</location>
    </subcellularLocation>
</comment>
<comment type="PTM">
    <text evidence="1">Methylated by PrmC. Methylation increases the termination efficiency of RF1.</text>
</comment>
<comment type="similarity">
    <text evidence="1">Belongs to the prokaryotic/mitochondrial release factor family.</text>
</comment>
<gene>
    <name evidence="1" type="primary">prfA</name>
    <name type="ordered locus">SSON_1967</name>
</gene>
<accession>Q3Z0S9</accession>
<name>RF1_SHISS</name>
<sequence length="360" mass="40517">MKPSIVAKLEALHERHEEVQALLGDAQTIADQERFRALSREYAQLSDVSRCFTDWQQVQEDIETAQMMLDDPEMREMAQDELREAKEKSEQLEQQLQVLLLPKDPDDERNAFLEVRAGTGGDEAALFAGDLFRMYSRYAEARRWRVEIMSASEGEHGGYKEIIAKISGDGVYGRLKFESGGHRVQRVPATESQGRIHTSACTVAVMPELPDAELPDINPADLRIDTFRSSGAGGQHVNTTDSAIRITHLPTGIVVECQDERSQHKNKAKALSVLGARIHAAEMAKRQQAEASTRRNLLGSGDRSDRNRTYNFPQGRVTDHRINLTLYRLDEVMEGKLDMLIEPIIQEHQADQLAALSEQE</sequence>
<organism>
    <name type="scientific">Shigella sonnei (strain Ss046)</name>
    <dbReference type="NCBI Taxonomy" id="300269"/>
    <lineage>
        <taxon>Bacteria</taxon>
        <taxon>Pseudomonadati</taxon>
        <taxon>Pseudomonadota</taxon>
        <taxon>Gammaproteobacteria</taxon>
        <taxon>Enterobacterales</taxon>
        <taxon>Enterobacteriaceae</taxon>
        <taxon>Shigella</taxon>
    </lineage>
</organism>
<reference key="1">
    <citation type="journal article" date="2005" name="Nucleic Acids Res.">
        <title>Genome dynamics and diversity of Shigella species, the etiologic agents of bacillary dysentery.</title>
        <authorList>
            <person name="Yang F."/>
            <person name="Yang J."/>
            <person name="Zhang X."/>
            <person name="Chen L."/>
            <person name="Jiang Y."/>
            <person name="Yan Y."/>
            <person name="Tang X."/>
            <person name="Wang J."/>
            <person name="Xiong Z."/>
            <person name="Dong J."/>
            <person name="Xue Y."/>
            <person name="Zhu Y."/>
            <person name="Xu X."/>
            <person name="Sun L."/>
            <person name="Chen S."/>
            <person name="Nie H."/>
            <person name="Peng J."/>
            <person name="Xu J."/>
            <person name="Wang Y."/>
            <person name="Yuan Z."/>
            <person name="Wen Y."/>
            <person name="Yao Z."/>
            <person name="Shen Y."/>
            <person name="Qiang B."/>
            <person name="Hou Y."/>
            <person name="Yu J."/>
            <person name="Jin Q."/>
        </authorList>
    </citation>
    <scope>NUCLEOTIDE SEQUENCE [LARGE SCALE GENOMIC DNA]</scope>
    <source>
        <strain>Ss046</strain>
    </source>
</reference>
<evidence type="ECO:0000255" key="1">
    <source>
        <dbReference type="HAMAP-Rule" id="MF_00093"/>
    </source>
</evidence>
<evidence type="ECO:0000256" key="2">
    <source>
        <dbReference type="SAM" id="MobiDB-lite"/>
    </source>
</evidence>
<proteinExistence type="inferred from homology"/>
<feature type="chain" id="PRO_0000263353" description="Peptide chain release factor 1">
    <location>
        <begin position="1"/>
        <end position="360"/>
    </location>
</feature>
<feature type="region of interest" description="Disordered" evidence="2">
    <location>
        <begin position="284"/>
        <end position="313"/>
    </location>
</feature>
<feature type="modified residue" description="N5-methylglutamine" evidence="1">
    <location>
        <position position="235"/>
    </location>
</feature>
<keyword id="KW-0963">Cytoplasm</keyword>
<keyword id="KW-0488">Methylation</keyword>
<keyword id="KW-0648">Protein biosynthesis</keyword>
<keyword id="KW-1185">Reference proteome</keyword>
<protein>
    <recommendedName>
        <fullName evidence="1">Peptide chain release factor 1</fullName>
        <shortName evidence="1">RF-1</shortName>
    </recommendedName>
</protein>